<gene>
    <name evidence="1" type="primary">fusA</name>
    <name type="ordered locus">YpAngola_A3675</name>
</gene>
<feature type="chain" id="PRO_1000091785" description="Elongation factor G">
    <location>
        <begin position="1"/>
        <end position="702"/>
    </location>
</feature>
<feature type="domain" description="tr-type G">
    <location>
        <begin position="8"/>
        <end position="290"/>
    </location>
</feature>
<feature type="binding site" evidence="1">
    <location>
        <begin position="17"/>
        <end position="24"/>
    </location>
    <ligand>
        <name>GTP</name>
        <dbReference type="ChEBI" id="CHEBI:37565"/>
    </ligand>
</feature>
<feature type="binding site" evidence="1">
    <location>
        <begin position="88"/>
        <end position="92"/>
    </location>
    <ligand>
        <name>GTP</name>
        <dbReference type="ChEBI" id="CHEBI:37565"/>
    </ligand>
</feature>
<feature type="binding site" evidence="1">
    <location>
        <begin position="142"/>
        <end position="145"/>
    </location>
    <ligand>
        <name>GTP</name>
        <dbReference type="ChEBI" id="CHEBI:37565"/>
    </ligand>
</feature>
<evidence type="ECO:0000255" key="1">
    <source>
        <dbReference type="HAMAP-Rule" id="MF_00054"/>
    </source>
</evidence>
<dbReference type="EMBL" id="CP000901">
    <property type="protein sequence ID" value="ABX87300.1"/>
    <property type="molecule type" value="Genomic_DNA"/>
</dbReference>
<dbReference type="RefSeq" id="WP_002212325.1">
    <property type="nucleotide sequence ID" value="NZ_CP009935.1"/>
</dbReference>
<dbReference type="SMR" id="A9R462"/>
<dbReference type="GeneID" id="96663201"/>
<dbReference type="KEGG" id="ypg:YpAngola_A3675"/>
<dbReference type="PATRIC" id="fig|349746.12.peg.381"/>
<dbReference type="GO" id="GO:0005737">
    <property type="term" value="C:cytoplasm"/>
    <property type="evidence" value="ECO:0007669"/>
    <property type="project" value="UniProtKB-SubCell"/>
</dbReference>
<dbReference type="GO" id="GO:0005525">
    <property type="term" value="F:GTP binding"/>
    <property type="evidence" value="ECO:0007669"/>
    <property type="project" value="UniProtKB-UniRule"/>
</dbReference>
<dbReference type="GO" id="GO:0003924">
    <property type="term" value="F:GTPase activity"/>
    <property type="evidence" value="ECO:0007669"/>
    <property type="project" value="InterPro"/>
</dbReference>
<dbReference type="GO" id="GO:0097216">
    <property type="term" value="F:guanosine tetraphosphate binding"/>
    <property type="evidence" value="ECO:0007669"/>
    <property type="project" value="UniProtKB-ARBA"/>
</dbReference>
<dbReference type="GO" id="GO:0003746">
    <property type="term" value="F:translation elongation factor activity"/>
    <property type="evidence" value="ECO:0007669"/>
    <property type="project" value="UniProtKB-UniRule"/>
</dbReference>
<dbReference type="GO" id="GO:0032790">
    <property type="term" value="P:ribosome disassembly"/>
    <property type="evidence" value="ECO:0007669"/>
    <property type="project" value="TreeGrafter"/>
</dbReference>
<dbReference type="CDD" id="cd01886">
    <property type="entry name" value="EF-G"/>
    <property type="match status" value="1"/>
</dbReference>
<dbReference type="CDD" id="cd16262">
    <property type="entry name" value="EFG_III"/>
    <property type="match status" value="1"/>
</dbReference>
<dbReference type="CDD" id="cd01434">
    <property type="entry name" value="EFG_mtEFG1_IV"/>
    <property type="match status" value="1"/>
</dbReference>
<dbReference type="CDD" id="cd03713">
    <property type="entry name" value="EFG_mtEFG_C"/>
    <property type="match status" value="1"/>
</dbReference>
<dbReference type="CDD" id="cd04088">
    <property type="entry name" value="EFG_mtEFG_II"/>
    <property type="match status" value="1"/>
</dbReference>
<dbReference type="FunFam" id="2.40.30.10:FF:000006">
    <property type="entry name" value="Elongation factor G"/>
    <property type="match status" value="1"/>
</dbReference>
<dbReference type="FunFam" id="3.30.230.10:FF:000003">
    <property type="entry name" value="Elongation factor G"/>
    <property type="match status" value="1"/>
</dbReference>
<dbReference type="FunFam" id="3.30.70.240:FF:000001">
    <property type="entry name" value="Elongation factor G"/>
    <property type="match status" value="1"/>
</dbReference>
<dbReference type="FunFam" id="3.30.70.870:FF:000001">
    <property type="entry name" value="Elongation factor G"/>
    <property type="match status" value="1"/>
</dbReference>
<dbReference type="FunFam" id="3.40.50.300:FF:000029">
    <property type="entry name" value="Elongation factor G"/>
    <property type="match status" value="1"/>
</dbReference>
<dbReference type="Gene3D" id="3.30.230.10">
    <property type="match status" value="1"/>
</dbReference>
<dbReference type="Gene3D" id="3.30.70.240">
    <property type="match status" value="1"/>
</dbReference>
<dbReference type="Gene3D" id="3.30.70.870">
    <property type="entry name" value="Elongation Factor G (Translational Gtpase), domain 3"/>
    <property type="match status" value="1"/>
</dbReference>
<dbReference type="Gene3D" id="3.40.50.300">
    <property type="entry name" value="P-loop containing nucleotide triphosphate hydrolases"/>
    <property type="match status" value="1"/>
</dbReference>
<dbReference type="Gene3D" id="2.40.30.10">
    <property type="entry name" value="Translation factors"/>
    <property type="match status" value="1"/>
</dbReference>
<dbReference type="HAMAP" id="MF_00054_B">
    <property type="entry name" value="EF_G_EF_2_B"/>
    <property type="match status" value="1"/>
</dbReference>
<dbReference type="InterPro" id="IPR041095">
    <property type="entry name" value="EFG_II"/>
</dbReference>
<dbReference type="InterPro" id="IPR009022">
    <property type="entry name" value="EFG_III"/>
</dbReference>
<dbReference type="InterPro" id="IPR035647">
    <property type="entry name" value="EFG_III/V"/>
</dbReference>
<dbReference type="InterPro" id="IPR047872">
    <property type="entry name" value="EFG_IV"/>
</dbReference>
<dbReference type="InterPro" id="IPR035649">
    <property type="entry name" value="EFG_V"/>
</dbReference>
<dbReference type="InterPro" id="IPR000640">
    <property type="entry name" value="EFG_V-like"/>
</dbReference>
<dbReference type="InterPro" id="IPR004161">
    <property type="entry name" value="EFTu-like_2"/>
</dbReference>
<dbReference type="InterPro" id="IPR031157">
    <property type="entry name" value="G_TR_CS"/>
</dbReference>
<dbReference type="InterPro" id="IPR027417">
    <property type="entry name" value="P-loop_NTPase"/>
</dbReference>
<dbReference type="InterPro" id="IPR020568">
    <property type="entry name" value="Ribosomal_Su5_D2-typ_SF"/>
</dbReference>
<dbReference type="InterPro" id="IPR014721">
    <property type="entry name" value="Ribsml_uS5_D2-typ_fold_subgr"/>
</dbReference>
<dbReference type="InterPro" id="IPR005225">
    <property type="entry name" value="Small_GTP-bd"/>
</dbReference>
<dbReference type="InterPro" id="IPR000795">
    <property type="entry name" value="T_Tr_GTP-bd_dom"/>
</dbReference>
<dbReference type="InterPro" id="IPR009000">
    <property type="entry name" value="Transl_B-barrel_sf"/>
</dbReference>
<dbReference type="InterPro" id="IPR004540">
    <property type="entry name" value="Transl_elong_EFG/EF2"/>
</dbReference>
<dbReference type="InterPro" id="IPR005517">
    <property type="entry name" value="Transl_elong_EFG/EF2_IV"/>
</dbReference>
<dbReference type="NCBIfam" id="TIGR00484">
    <property type="entry name" value="EF-G"/>
    <property type="match status" value="1"/>
</dbReference>
<dbReference type="NCBIfam" id="NF009381">
    <property type="entry name" value="PRK12740.1-5"/>
    <property type="match status" value="1"/>
</dbReference>
<dbReference type="NCBIfam" id="TIGR00231">
    <property type="entry name" value="small_GTP"/>
    <property type="match status" value="1"/>
</dbReference>
<dbReference type="PANTHER" id="PTHR43261:SF1">
    <property type="entry name" value="RIBOSOME-RELEASING FACTOR 2, MITOCHONDRIAL"/>
    <property type="match status" value="1"/>
</dbReference>
<dbReference type="PANTHER" id="PTHR43261">
    <property type="entry name" value="TRANSLATION ELONGATION FACTOR G-RELATED"/>
    <property type="match status" value="1"/>
</dbReference>
<dbReference type="Pfam" id="PF00679">
    <property type="entry name" value="EFG_C"/>
    <property type="match status" value="1"/>
</dbReference>
<dbReference type="Pfam" id="PF14492">
    <property type="entry name" value="EFG_III"/>
    <property type="match status" value="1"/>
</dbReference>
<dbReference type="Pfam" id="PF03764">
    <property type="entry name" value="EFG_IV"/>
    <property type="match status" value="1"/>
</dbReference>
<dbReference type="Pfam" id="PF00009">
    <property type="entry name" value="GTP_EFTU"/>
    <property type="match status" value="1"/>
</dbReference>
<dbReference type="Pfam" id="PF03144">
    <property type="entry name" value="GTP_EFTU_D2"/>
    <property type="match status" value="1"/>
</dbReference>
<dbReference type="PRINTS" id="PR00315">
    <property type="entry name" value="ELONGATNFCT"/>
</dbReference>
<dbReference type="SMART" id="SM00838">
    <property type="entry name" value="EFG_C"/>
    <property type="match status" value="1"/>
</dbReference>
<dbReference type="SMART" id="SM00889">
    <property type="entry name" value="EFG_IV"/>
    <property type="match status" value="1"/>
</dbReference>
<dbReference type="SUPFAM" id="SSF54980">
    <property type="entry name" value="EF-G C-terminal domain-like"/>
    <property type="match status" value="2"/>
</dbReference>
<dbReference type="SUPFAM" id="SSF52540">
    <property type="entry name" value="P-loop containing nucleoside triphosphate hydrolases"/>
    <property type="match status" value="1"/>
</dbReference>
<dbReference type="SUPFAM" id="SSF54211">
    <property type="entry name" value="Ribosomal protein S5 domain 2-like"/>
    <property type="match status" value="1"/>
</dbReference>
<dbReference type="SUPFAM" id="SSF50447">
    <property type="entry name" value="Translation proteins"/>
    <property type="match status" value="1"/>
</dbReference>
<dbReference type="PROSITE" id="PS00301">
    <property type="entry name" value="G_TR_1"/>
    <property type="match status" value="1"/>
</dbReference>
<dbReference type="PROSITE" id="PS51722">
    <property type="entry name" value="G_TR_2"/>
    <property type="match status" value="1"/>
</dbReference>
<comment type="function">
    <text evidence="1">Catalyzes the GTP-dependent ribosomal translocation step during translation elongation. During this step, the ribosome changes from the pre-translocational (PRE) to the post-translocational (POST) state as the newly formed A-site-bound peptidyl-tRNA and P-site-bound deacylated tRNA move to the P and E sites, respectively. Catalyzes the coordinated movement of the two tRNA molecules, the mRNA and conformational changes in the ribosome.</text>
</comment>
<comment type="subcellular location">
    <subcellularLocation>
        <location evidence="1">Cytoplasm</location>
    </subcellularLocation>
</comment>
<comment type="similarity">
    <text evidence="1">Belongs to the TRAFAC class translation factor GTPase superfamily. Classic translation factor GTPase family. EF-G/EF-2 subfamily.</text>
</comment>
<keyword id="KW-0963">Cytoplasm</keyword>
<keyword id="KW-0251">Elongation factor</keyword>
<keyword id="KW-0342">GTP-binding</keyword>
<keyword id="KW-0547">Nucleotide-binding</keyword>
<keyword id="KW-0648">Protein biosynthesis</keyword>
<proteinExistence type="inferred from homology"/>
<accession>A9R462</accession>
<reference key="1">
    <citation type="journal article" date="2010" name="J. Bacteriol.">
        <title>Genome sequence of the deep-rooted Yersinia pestis strain Angola reveals new insights into the evolution and pangenome of the plague bacterium.</title>
        <authorList>
            <person name="Eppinger M."/>
            <person name="Worsham P.L."/>
            <person name="Nikolich M.P."/>
            <person name="Riley D.R."/>
            <person name="Sebastian Y."/>
            <person name="Mou S."/>
            <person name="Achtman M."/>
            <person name="Lindler L.E."/>
            <person name="Ravel J."/>
        </authorList>
    </citation>
    <scope>NUCLEOTIDE SEQUENCE [LARGE SCALE GENOMIC DNA]</scope>
    <source>
        <strain>Angola</strain>
    </source>
</reference>
<sequence length="702" mass="77537">MARKTPIERYRNIGISAHIDAGKTTTTERILFYTGVNHKIGEVHDGAATMDWMEQEQERGITITSAATTCFWSGMAKQFEPHHVNIIDTPGHVDFTIEVERSMRVLDGAVMVYCAVGGVQPQSETVWRQANKYKVPRIAFVNKMDRMGANFLRVVGQLKSRLGANPVPLQLAIGAEEKFTGIIDLVKMKAINWNEADQGVTFEYEEIPADMAELAAEWHQNLVESAAEASDELMDKYLGGEELTEEEIKKALRQRVLKSEIILVTCGSAFKNKGVQAMLDAVIEYLPAPTDVESINGILDDGKDTPAVRHSDDKEPFSALAFKIATDPFVGNLTFFRVYSGIVNSGDTVLNSVKSQRERLGRIVQMHANKREEIKEVHAGDIAAAIGLKDVTTGDTLCDPNNPIILERMEFPEPVISVAVEPKTKADQEKMGMALGRLAKEDPSFRVWTDEESGQTIIAGMGELHLDILVDRMRREFNVEANVGKPQVAYRETIRETVKDVEGKHAKQSGGRGQYGHVVIDMSPLPPGGVGYEFVNEIVGGSIPKEFIPAVDKGIQEQLKSGPLAGYPVVDVKVRLHYGSYHDVDSSELAFKLAGSIAFKEGFKRAKPVLLEPIMKVEVETPEDYMGDVMGDLNRRRGIIEGMEDTATGKTVRVKVPLSEMFGYATDLRSQTQGRASYSMEFLEYAEAPSNVAKAVIEARGK</sequence>
<organism>
    <name type="scientific">Yersinia pestis bv. Antiqua (strain Angola)</name>
    <dbReference type="NCBI Taxonomy" id="349746"/>
    <lineage>
        <taxon>Bacteria</taxon>
        <taxon>Pseudomonadati</taxon>
        <taxon>Pseudomonadota</taxon>
        <taxon>Gammaproteobacteria</taxon>
        <taxon>Enterobacterales</taxon>
        <taxon>Yersiniaceae</taxon>
        <taxon>Yersinia</taxon>
    </lineage>
</organism>
<protein>
    <recommendedName>
        <fullName evidence="1">Elongation factor G</fullName>
        <shortName evidence="1">EF-G</shortName>
    </recommendedName>
</protein>
<name>EFG_YERPG</name>